<feature type="chain" id="PRO_0000451418" description="DNA-dependent metalloprotease SPRTN">
    <location>
        <begin position="1"/>
        <end position="565"/>
    </location>
</feature>
<feature type="domain" description="SprT-like" evidence="2">
    <location>
        <begin position="23"/>
        <end position="130"/>
    </location>
</feature>
<feature type="zinc finger region" description="UBZ4-type 1" evidence="3">
    <location>
        <begin position="436"/>
        <end position="463"/>
    </location>
</feature>
<feature type="zinc finger region" description="UBZ4-type 2" evidence="3">
    <location>
        <begin position="537"/>
        <end position="564"/>
    </location>
</feature>
<feature type="region of interest" description="Disordered" evidence="5">
    <location>
        <begin position="191"/>
        <end position="219"/>
    </location>
</feature>
<feature type="region of interest" description="Disordered" evidence="5">
    <location>
        <begin position="349"/>
        <end position="389"/>
    </location>
</feature>
<feature type="short sequence motif" description="SHP-box" evidence="1">
    <location>
        <begin position="231"/>
        <end position="239"/>
    </location>
</feature>
<feature type="short sequence motif" description="PIP-box" evidence="1">
    <location>
        <begin position="288"/>
        <end position="295"/>
    </location>
</feature>
<feature type="short sequence motif" description="Nuclear localization signal" evidence="1">
    <location>
        <begin position="476"/>
        <end position="499"/>
    </location>
</feature>
<feature type="compositionally biased region" description="Polar residues" evidence="5">
    <location>
        <begin position="205"/>
        <end position="215"/>
    </location>
</feature>
<feature type="compositionally biased region" description="Polar residues" evidence="5">
    <location>
        <begin position="351"/>
        <end position="361"/>
    </location>
</feature>
<feature type="compositionally biased region" description="Polar residues" evidence="5">
    <location>
        <begin position="372"/>
        <end position="386"/>
    </location>
</feature>
<feature type="active site" evidence="4 11">
    <location>
        <position position="89"/>
    </location>
</feature>
<feature type="binding site" evidence="1 4">
    <location>
        <position position="88"/>
    </location>
    <ligand>
        <name>Zn(2+)</name>
        <dbReference type="ChEBI" id="CHEBI:29105"/>
        <label>1</label>
        <note>catalytic</note>
    </ligand>
</feature>
<feature type="binding site" evidence="1 4">
    <location>
        <position position="92"/>
    </location>
    <ligand>
        <name>Zn(2+)</name>
        <dbReference type="ChEBI" id="CHEBI:29105"/>
        <label>1</label>
        <note>catalytic</note>
    </ligand>
</feature>
<feature type="binding site" evidence="1">
    <location>
        <position position="107"/>
    </location>
    <ligand>
        <name>Zn(2+)</name>
        <dbReference type="ChEBI" id="CHEBI:29105"/>
        <label>1</label>
        <note>catalytic</note>
    </ligand>
</feature>
<feature type="binding site" evidence="3">
    <location>
        <position position="439"/>
    </location>
    <ligand>
        <name>Zn(2+)</name>
        <dbReference type="ChEBI" id="CHEBI:29105"/>
        <label>2</label>
    </ligand>
</feature>
<feature type="binding site" evidence="3">
    <location>
        <position position="442"/>
    </location>
    <ligand>
        <name>Zn(2+)</name>
        <dbReference type="ChEBI" id="CHEBI:29105"/>
        <label>2</label>
    </ligand>
</feature>
<feature type="binding site" evidence="3">
    <location>
        <position position="454"/>
    </location>
    <ligand>
        <name>Zn(2+)</name>
        <dbReference type="ChEBI" id="CHEBI:29105"/>
        <label>2</label>
    </ligand>
</feature>
<feature type="binding site" evidence="3">
    <location>
        <position position="458"/>
    </location>
    <ligand>
        <name>Zn(2+)</name>
        <dbReference type="ChEBI" id="CHEBI:29105"/>
        <label>2</label>
    </ligand>
</feature>
<feature type="binding site" evidence="3">
    <location>
        <position position="540"/>
    </location>
    <ligand>
        <name>Zn(2+)</name>
        <dbReference type="ChEBI" id="CHEBI:29105"/>
        <label>3</label>
    </ligand>
</feature>
<feature type="binding site" evidence="3">
    <location>
        <position position="543"/>
    </location>
    <ligand>
        <name>Zn(2+)</name>
        <dbReference type="ChEBI" id="CHEBI:29105"/>
        <label>3</label>
    </ligand>
</feature>
<feature type="binding site" evidence="3">
    <location>
        <position position="555"/>
    </location>
    <ligand>
        <name>Zn(2+)</name>
        <dbReference type="ChEBI" id="CHEBI:29105"/>
        <label>3</label>
    </ligand>
</feature>
<feature type="binding site" evidence="3">
    <location>
        <position position="559"/>
    </location>
    <ligand>
        <name>Zn(2+)</name>
        <dbReference type="ChEBI" id="CHEBI:29105"/>
        <label>3</label>
    </ligand>
</feature>
<feature type="mutagenesis site" description="Abolished metalloprotease activity and ability to cleave covalent DNA-protein cross-links (DPCs)." evidence="6">
    <original>E</original>
    <variation>Q</variation>
    <location>
        <position position="89"/>
    </location>
</feature>
<feature type="mutagenesis site" description="Does not affect metalloprotease activity and ability to cleave covalent DNA-protein cross-links (DPCs)." evidence="6">
    <original>FSGTGYKL</original>
    <variation>ASGTGYKA</variation>
    <location>
        <begin position="231"/>
        <end position="238"/>
    </location>
</feature>
<feature type="mutagenesis site" description="Does not affect metalloprotease activity and ability to cleave covalent DNA-protein cross-links (DPCs)." evidence="6">
    <original>QKSVLPFF</original>
    <variation>AKSALPAA</variation>
    <location>
        <begin position="331"/>
        <end position="338"/>
    </location>
</feature>
<feature type="mutagenesis site" description="Abolished metalloprotease activity and ability to cleave covalent DNA-protein cross-links (DPCs); when associated with 540-A--A-543." evidence="6">
    <original>CPVC</original>
    <variation>APVA</variation>
    <location>
        <begin position="439"/>
        <end position="442"/>
    </location>
</feature>
<feature type="mutagenesis site" description="Abolished metalloprotease activity and ability to cleave covalent DNA-protein cross-links (DPCs); when associated with 439-A--A-442." evidence="6">
    <original>CPVC</original>
    <variation>APVA</variation>
    <location>
        <begin position="540"/>
        <end position="543"/>
    </location>
</feature>
<feature type="sequence conflict" description="In Ref. 2; AAI60677/AAI30076." evidence="10" ref="2">
    <original>D</original>
    <variation>Y</variation>
    <location>
        <position position="204"/>
    </location>
</feature>
<feature type="sequence conflict" description="In Ref. 2; AAI60677/AAI30076." evidence="10" ref="2">
    <original>P</original>
    <variation>L</variation>
    <location>
        <position position="270"/>
    </location>
</feature>
<evidence type="ECO:0000250" key="1">
    <source>
        <dbReference type="UniProtKB" id="Q9H040"/>
    </source>
</evidence>
<evidence type="ECO:0000255" key="2"/>
<evidence type="ECO:0000255" key="3">
    <source>
        <dbReference type="PROSITE-ProRule" id="PRU01256"/>
    </source>
</evidence>
<evidence type="ECO:0000255" key="4">
    <source>
        <dbReference type="PROSITE-ProRule" id="PRU10095"/>
    </source>
</evidence>
<evidence type="ECO:0000256" key="5">
    <source>
        <dbReference type="SAM" id="MobiDB-lite"/>
    </source>
</evidence>
<evidence type="ECO:0000269" key="6">
    <source>
    </source>
</evidence>
<evidence type="ECO:0000269" key="7">
    <source>
    </source>
</evidence>
<evidence type="ECO:0000269" key="8">
    <source>
    </source>
</evidence>
<evidence type="ECO:0000303" key="9">
    <source>
    </source>
</evidence>
<evidence type="ECO:0000305" key="10"/>
<evidence type="ECO:0000305" key="11">
    <source>
    </source>
</evidence>
<evidence type="ECO:0000312" key="12">
    <source>
        <dbReference type="EMBL" id="OCT78037.1"/>
    </source>
</evidence>
<evidence type="ECO:0000312" key="13">
    <source>
        <dbReference type="Proteomes" id="UP000186698"/>
    </source>
</evidence>
<organism>
    <name type="scientific">Xenopus laevis</name>
    <name type="common">African clawed frog</name>
    <dbReference type="NCBI Taxonomy" id="8355"/>
    <lineage>
        <taxon>Eukaryota</taxon>
        <taxon>Metazoa</taxon>
        <taxon>Chordata</taxon>
        <taxon>Craniata</taxon>
        <taxon>Vertebrata</taxon>
        <taxon>Euteleostomi</taxon>
        <taxon>Amphibia</taxon>
        <taxon>Batrachia</taxon>
        <taxon>Anura</taxon>
        <taxon>Pipoidea</taxon>
        <taxon>Pipidae</taxon>
        <taxon>Xenopodinae</taxon>
        <taxon>Xenopus</taxon>
        <taxon>Xenopus</taxon>
    </lineage>
</organism>
<gene>
    <name evidence="9" type="primary">sprtn</name>
    <name evidence="12" type="ORF">XELAEV_18029135mg</name>
</gene>
<reference evidence="13" key="1">
    <citation type="journal article" date="2016" name="Nature">
        <title>Genome evolution in the allotetraploid frog Xenopus laevis.</title>
        <authorList>
            <person name="Session A.M."/>
            <person name="Uno Y."/>
            <person name="Kwon T."/>
            <person name="Chapman J.A."/>
            <person name="Toyoda A."/>
            <person name="Takahashi S."/>
            <person name="Fukui A."/>
            <person name="Hikosaka A."/>
            <person name="Suzuki A."/>
            <person name="Kondo M."/>
            <person name="van Heeringen S.J."/>
            <person name="Quigley I."/>
            <person name="Heinz S."/>
            <person name="Ogino H."/>
            <person name="Ochi H."/>
            <person name="Hellsten U."/>
            <person name="Lyons J.B."/>
            <person name="Simakov O."/>
            <person name="Putnam N."/>
            <person name="Stites J."/>
            <person name="Kuroki Y."/>
            <person name="Tanaka T."/>
            <person name="Michiue T."/>
            <person name="Watanabe M."/>
            <person name="Bogdanovic O."/>
            <person name="Lister R."/>
            <person name="Georgiou G."/>
            <person name="Paranjpe S.S."/>
            <person name="van Kruijsbergen I."/>
            <person name="Shu S."/>
            <person name="Carlson J."/>
            <person name="Kinoshita T."/>
            <person name="Ohta Y."/>
            <person name="Mawaribuchi S."/>
            <person name="Jenkins J."/>
            <person name="Grimwood J."/>
            <person name="Schmutz J."/>
            <person name="Mitros T."/>
            <person name="Mozaffari S.V."/>
            <person name="Suzuki Y."/>
            <person name="Haramoto Y."/>
            <person name="Yamamoto T.S."/>
            <person name="Takagi C."/>
            <person name="Heald R."/>
            <person name="Miller K."/>
            <person name="Haudenschild C."/>
            <person name="Kitzman J."/>
            <person name="Nakayama T."/>
            <person name="Izutsu Y."/>
            <person name="Robert J."/>
            <person name="Fortriede J."/>
            <person name="Burns K."/>
            <person name="Lotay V."/>
            <person name="Karimi K."/>
            <person name="Yasuoka Y."/>
            <person name="Dichmann D.S."/>
            <person name="Flajnik M.F."/>
            <person name="Houston D.W."/>
            <person name="Shendure J."/>
            <person name="DuPasquier L."/>
            <person name="Vize P.D."/>
            <person name="Zorn A.M."/>
            <person name="Ito M."/>
            <person name="Marcotte E.M."/>
            <person name="Wallingford J.B."/>
            <person name="Ito Y."/>
            <person name="Asashima M."/>
            <person name="Ueno N."/>
            <person name="Matsuda Y."/>
            <person name="Veenstra G.J."/>
            <person name="Fujiyama A."/>
            <person name="Harland R.M."/>
            <person name="Taira M."/>
            <person name="Rokhsar D.S."/>
        </authorList>
    </citation>
    <scope>NUCLEOTIDE SEQUENCE [LARGE SCALE GENOMIC DNA]</scope>
    <source>
        <strain>J</strain>
    </source>
</reference>
<reference key="2">
    <citation type="submission" date="2008-03" db="EMBL/GenBank/DDBJ databases">
        <authorList>
            <consortium name="NIH - Xenopus Gene Collection (XGC) project"/>
        </authorList>
    </citation>
    <scope>NUCLEOTIDE SEQUENCE [LARGE SCALE MRNA]</scope>
    <source>
        <tissue>Ovary</tissue>
    </source>
</reference>
<reference key="3">
    <citation type="journal article" date="2019" name="Mol. Cell">
        <title>Replication-coupled DNA-protein crosslink repair by SPRTN and the proteasome in Xenopus egg extracts.</title>
        <authorList>
            <person name="Larsen N.B."/>
            <person name="Gao A.O."/>
            <person name="Sparks J.L."/>
            <person name="Gallina I."/>
            <person name="Wu R.A."/>
            <person name="Mann M."/>
            <person name="Raeschle M."/>
            <person name="Walter J.C."/>
            <person name="Duxin J.P."/>
        </authorList>
    </citation>
    <scope>FUNCTION</scope>
    <scope>CATALYTIC ACTIVITY</scope>
    <scope>SUBCELLULAR LOCATION</scope>
    <scope>ACTIVE SITE</scope>
    <scope>MUTAGENESIS OF GLU-89; 231-PHE--LEU-238; 331-GLN--PHE-338; 439-CYS--CYS-442 AND 540-CYS--CYS-543</scope>
</reference>
<reference key="4">
    <citation type="journal article" date="2022" name="Nat. Struct. Mol. Biol.">
        <title>The HMCES DNA-protein cross-link functions as an intermediate in DNA interstrand cross-link repair.</title>
        <authorList>
            <person name="Semlow D.R."/>
            <person name="MacKrell V.A."/>
            <person name="Walter J.C."/>
        </authorList>
    </citation>
    <scope>FUNCTION</scope>
</reference>
<reference key="5">
    <citation type="journal article" date="2023" name="Mol. Cell">
        <title>The FANCJ helicase unfolds DNA-protein crosslinks to promote their repair.</title>
        <authorList>
            <person name="Yaneva D."/>
            <person name="Sparks J.L."/>
            <person name="Donsbach M."/>
            <person name="Zhao S."/>
            <person name="Weickert P."/>
            <person name="Bezalel-Buch R."/>
            <person name="Stingele J."/>
            <person name="Walter J.C."/>
        </authorList>
    </citation>
    <scope>FUNCTION</scope>
</reference>
<dbReference type="EC" id="3.4.24.-" evidence="11"/>
<dbReference type="EMBL" id="CM004475">
    <property type="protein sequence ID" value="OCT78037.1"/>
    <property type="molecule type" value="Genomic_DNA"/>
</dbReference>
<dbReference type="EMBL" id="BC160677">
    <property type="protein sequence ID" value="AAI60677.1"/>
    <property type="status" value="ALT_INIT"/>
    <property type="molecule type" value="mRNA"/>
</dbReference>
<dbReference type="EMBL" id="BC130075">
    <property type="protein sequence ID" value="AAI30076.1"/>
    <property type="status" value="ALT_INIT"/>
    <property type="molecule type" value="mRNA"/>
</dbReference>
<dbReference type="SMR" id="A0A1L8G2K9"/>
<dbReference type="STRING" id="8355.A0A1L8G2K9"/>
<dbReference type="PaxDb" id="8355-A0A1L8G2K9"/>
<dbReference type="GeneID" id="100036995"/>
<dbReference type="KEGG" id="xla:100036995"/>
<dbReference type="AGR" id="Xenbase:XB-GENE-5845827"/>
<dbReference type="CTD" id="100036995"/>
<dbReference type="Xenbase" id="XB-GENE-5845827">
    <property type="gene designation" value="sprtn.S"/>
</dbReference>
<dbReference type="OMA" id="NDNKSCT"/>
<dbReference type="OrthoDB" id="5236983at2759"/>
<dbReference type="Proteomes" id="UP000186698">
    <property type="component" value="Chromosome 5S"/>
</dbReference>
<dbReference type="Proteomes" id="UP000694892">
    <property type="component" value="Chromosome 5S"/>
</dbReference>
<dbReference type="Bgee" id="100036995">
    <property type="expression patterns" value="Expressed in egg cell and 19 other cell types or tissues"/>
</dbReference>
<dbReference type="GO" id="GO:0000785">
    <property type="term" value="C:chromatin"/>
    <property type="evidence" value="ECO:0000250"/>
    <property type="project" value="UniProtKB"/>
</dbReference>
<dbReference type="GO" id="GO:0005634">
    <property type="term" value="C:nucleus"/>
    <property type="evidence" value="ECO:0000250"/>
    <property type="project" value="UniProtKB"/>
</dbReference>
<dbReference type="GO" id="GO:0003690">
    <property type="term" value="F:double-stranded DNA binding"/>
    <property type="evidence" value="ECO:0000250"/>
    <property type="project" value="UniProtKB"/>
</dbReference>
<dbReference type="GO" id="GO:0004222">
    <property type="term" value="F:metalloendopeptidase activity"/>
    <property type="evidence" value="ECO:0000314"/>
    <property type="project" value="UniProtKB"/>
</dbReference>
<dbReference type="GO" id="GO:0031593">
    <property type="term" value="F:polyubiquitin modification-dependent protein binding"/>
    <property type="evidence" value="ECO:0000318"/>
    <property type="project" value="GO_Central"/>
</dbReference>
<dbReference type="GO" id="GO:0003697">
    <property type="term" value="F:single-stranded DNA binding"/>
    <property type="evidence" value="ECO:0000250"/>
    <property type="project" value="UniProtKB"/>
</dbReference>
<dbReference type="GO" id="GO:0008270">
    <property type="term" value="F:zinc ion binding"/>
    <property type="evidence" value="ECO:0007669"/>
    <property type="project" value="UniProtKB-KW"/>
</dbReference>
<dbReference type="GO" id="GO:0006974">
    <property type="term" value="P:DNA damage response"/>
    <property type="evidence" value="ECO:0000314"/>
    <property type="project" value="UniProtKB"/>
</dbReference>
<dbReference type="GO" id="GO:0016540">
    <property type="term" value="P:protein autoprocessing"/>
    <property type="evidence" value="ECO:0000250"/>
    <property type="project" value="UniProtKB"/>
</dbReference>
<dbReference type="GO" id="GO:0106300">
    <property type="term" value="P:protein-DNA covalent cross-linking repair"/>
    <property type="evidence" value="ECO:0000314"/>
    <property type="project" value="UniProtKB"/>
</dbReference>
<dbReference type="GO" id="GO:0006508">
    <property type="term" value="P:proteolysis"/>
    <property type="evidence" value="ECO:0000250"/>
    <property type="project" value="UniProtKB"/>
</dbReference>
<dbReference type="Gene3D" id="3.30.160.60">
    <property type="entry name" value="Classic Zinc Finger"/>
    <property type="match status" value="2"/>
</dbReference>
<dbReference type="InterPro" id="IPR006642">
    <property type="entry name" value="Rad18_UBZ4"/>
</dbReference>
<dbReference type="InterPro" id="IPR044245">
    <property type="entry name" value="Spartan"/>
</dbReference>
<dbReference type="InterPro" id="IPR006640">
    <property type="entry name" value="SprT-like_domain"/>
</dbReference>
<dbReference type="InterPro" id="IPR055220">
    <property type="entry name" value="SPRTN_ZBD"/>
</dbReference>
<dbReference type="PANTHER" id="PTHR21220">
    <property type="entry name" value="DNA-DEPENDENT METALLOPROTEASE SPRTN"/>
    <property type="match status" value="1"/>
</dbReference>
<dbReference type="PANTHER" id="PTHR21220:SF5">
    <property type="entry name" value="DNA-DEPENDENT METALLOPROTEASE SPRTN"/>
    <property type="match status" value="1"/>
</dbReference>
<dbReference type="Pfam" id="PF10263">
    <property type="entry name" value="SprT-like"/>
    <property type="match status" value="1"/>
</dbReference>
<dbReference type="Pfam" id="PF22934">
    <property type="entry name" value="SPRTN_ZBD"/>
    <property type="match status" value="1"/>
</dbReference>
<dbReference type="SMART" id="SM00731">
    <property type="entry name" value="SprT"/>
    <property type="match status" value="1"/>
</dbReference>
<dbReference type="SMART" id="SM00734">
    <property type="entry name" value="ZnF_Rad18"/>
    <property type="match status" value="2"/>
</dbReference>
<dbReference type="PROSITE" id="PS51908">
    <property type="entry name" value="ZF_UBZ4"/>
    <property type="match status" value="2"/>
</dbReference>
<dbReference type="PROSITE" id="PS00142">
    <property type="entry name" value="ZINC_PROTEASE"/>
    <property type="match status" value="1"/>
</dbReference>
<sequence>MGDMQMSVVDPTWELLDPNPDIRALFLEFNDTFFWGQLSGVEVKWSARMTLCAGVCSYEGRGGLCSIRLSEPLLKLRPRKDLVETLLHEMIHALLFVTHNNKDHDSHGPEFCKHMERINGRTGANISVYHNFHDEVDEYRKHWWLCNGPCQKRKPYFGYVKRAMNRAPSSLDPWWADHQRTCGGSFVKVKEPENYPQKRKRKNDPTISEVNSSSHVKGKSNGVDIRTVIPFSGTGYKLFEPNKSDAPLKILNINPTKDKAAVPLLNHTPPSTNINGTFLTNKIGSAKSTPAQSILTKVSVANTKVFINLNGSPIKLPSGSKNKSHQISSKQKSVLPFFKMQKDNSFDLTLPSPSIQSTSQKPQKDISFGFTLPSQSFPSTSPGSNSENKEPLYKKLQMNDRESFIIHSGNKTNVNDNKSCTGPAATTASGLNHTIKVSCPVCGTEVLECKINDHLDTCTSSGPQKDILLDVSLPLQSFPSTSQGSNSAIKEPLYKKLQINDKDSFIIHSGNKTNVNDNKSCTRPAATTASGFNHTIKVCCPVCGTDVLQDKINDHLDTCLQNCNT</sequence>
<accession>A0A1L8G2K9</accession>
<accession>A1L3F9</accession>
<accession>B1H1N6</accession>
<keyword id="KW-0068">Autocatalytic cleavage</keyword>
<keyword id="KW-0158">Chromosome</keyword>
<keyword id="KW-0227">DNA damage</keyword>
<keyword id="KW-0234">DNA repair</keyword>
<keyword id="KW-0378">Hydrolase</keyword>
<keyword id="KW-1017">Isopeptide bond</keyword>
<keyword id="KW-0479">Metal-binding</keyword>
<keyword id="KW-0482">Metalloprotease</keyword>
<keyword id="KW-0539">Nucleus</keyword>
<keyword id="KW-0645">Protease</keyword>
<keyword id="KW-1185">Reference proteome</keyword>
<keyword id="KW-0677">Repeat</keyword>
<keyword id="KW-0862">Zinc</keyword>
<keyword id="KW-0863">Zinc-finger</keyword>
<name>SPRTN_XENLA</name>
<comment type="function">
    <text evidence="1 6 7 8">DNA-dependent metalloendopeptidase that mediates the proteolytic cleavage of covalent DNA-protein cross-links (DPCs) during DNA synthesis, thereby playing a key role in maintaining genomic integrity (PubMed:30595436, PubMed:35534579, PubMed:36608669). DPCs are highly toxic DNA lesions that interfere with essential chromatin transactions, such as replication and transcription, and which are induced by reactive agents, such as UV light or formaldehyde (By similarity). Associates with the DNA replication machinery and specifically removes DPCs during DNA synthesis (By similarity). Catalyzes proteolytic cleavage of the hmces DNA-protein cross-link following unfolding by the brip1/fancj helicase (PubMed:35534579, PubMed:36608669). Acts as a pleiotropic protease for DNA-binding proteins cross-linked with DNA, such as top1, top2a, histones H3 and H4 (By similarity). Mediates degradation of DPCs that are not ubiquitinated, while it is not able to degrade ubiquitinated DPCs (PubMed:30595436). SPRTN activation requires polymerase collision with DPCs followed by helicase bypass of DPCs (PubMed:30595436). May also act as a 'reader' of ubiquitinated pcna: facilitates chromatin association of rad18 and is required for efficient pcna monoubiquitination, promoting a feed-forward loop to enhance pcna ubiquitination and translesion DNA synthesis (By similarity). Acts as a regulator of translesion DNA synthesis by recruiting vcp/p97 to sites of DNA damage (By similarity).</text>
</comment>
<comment type="cofactor">
    <cofactor evidence="1">
        <name>Zn(2+)</name>
        <dbReference type="ChEBI" id="CHEBI:29105"/>
    </cofactor>
</comment>
<comment type="activity regulation">
    <text evidence="1">DNA-binding activates the protease activity: single-stranded DNA-binding specifically activates ability to cleave covalent DNA-protein cross-links (DPCs) (By similarity). In contrast, double-stranded DNA-binding specifically activates autocatalytic cleavage, and subsequent inactivation (By similarity).</text>
</comment>
<comment type="subunit">
    <text evidence="1">Homodimer.</text>
</comment>
<comment type="subcellular location">
    <subcellularLocation>
        <location evidence="1">Nucleus</location>
    </subcellularLocation>
    <subcellularLocation>
        <location evidence="6">Chromosome</location>
    </subcellularLocation>
    <text evidence="1">Localizes to sites of UV damage via the PIP-box (By similarity). Recruited to stalled replication forks at sites of replication stress (By similarity).</text>
</comment>
<comment type="domain">
    <text evidence="1">The UBZ4-type zinc fingers mediate binding to 'Lys-48'- and 'Lys-63'-linked polyubiquitin.</text>
</comment>
<comment type="PTM">
    <text evidence="1">Autocatalytically cleaved in response to double-stranded DNA-binding: autocatalytic cleavage takes place in trans and leads to inactivation.</text>
</comment>
<comment type="similarity">
    <text evidence="10">Belongs to the Spartan family.</text>
</comment>
<comment type="sequence caution" evidence="10">
    <conflict type="erroneous initiation">
        <sequence resource="EMBL-CDS" id="AAI30076"/>
    </conflict>
    <text>Extended N-terminus.</text>
</comment>
<comment type="sequence caution" evidence="10">
    <conflict type="erroneous initiation">
        <sequence resource="EMBL-CDS" id="AAI60677"/>
    </conflict>
    <text>Extended N-terminus.</text>
</comment>
<proteinExistence type="evidence at protein level"/>
<protein>
    <recommendedName>
        <fullName evidence="10">DNA-dependent metalloprotease SPRTN</fullName>
        <ecNumber evidence="11">3.4.24.-</ecNumber>
    </recommendedName>
    <alternativeName>
        <fullName evidence="1">Protein with SprT-like domain at the N terminus</fullName>
        <shortName evidence="1">Spartan</shortName>
    </alternativeName>
</protein>